<comment type="function">
    <text evidence="1">One of the primary rRNA binding proteins, it binds directly to 16S rRNA central domain where it helps coordinate assembly of the platform of the 30S subunit.</text>
</comment>
<comment type="subunit">
    <text evidence="1">Part of the 30S ribosomal subunit.</text>
</comment>
<comment type="subcellular location">
    <subcellularLocation>
        <location>Plastid</location>
        <location>Chloroplast</location>
    </subcellularLocation>
</comment>
<comment type="similarity">
    <text evidence="2">Belongs to the universal ribosomal protein uS8 family.</text>
</comment>
<accession>A6MM72</accession>
<sequence length="132" mass="15217">MGRDTIANIITSIRNADMDKKGTVRIASTNITENIVKILLREGFIENVRKHRESNKYFLVSTLRHRRSRKGPYRTILKRISRPGLRIYSNYQRIPRILGGMGIVILSTSRGIMTDREARLEGIGGEILCYIW</sequence>
<protein>
    <recommendedName>
        <fullName evidence="2">Small ribosomal subunit protein uS8c</fullName>
    </recommendedName>
    <alternativeName>
        <fullName>30S ribosomal protein S8, chloroplastic</fullName>
    </alternativeName>
</protein>
<name>RR8_BUXMI</name>
<gene>
    <name type="primary">rps8</name>
</gene>
<proteinExistence type="inferred from homology"/>
<reference key="1">
    <citation type="journal article" date="2007" name="Mol. Phylogenet. Evol.">
        <title>Phylogenetic and evolutionary implications of complete chloroplast genome sequences of four early-diverging angiosperms: Buxus (Buxaceae), Chloranthus (Chloranthaceae), Dioscorea (Dioscoreaceae), and Illicium (Schisandraceae).</title>
        <authorList>
            <person name="Hansen D.R."/>
            <person name="Dastidar S.G."/>
            <person name="Cai Z."/>
            <person name="Penaflor C."/>
            <person name="Kuehl J.V."/>
            <person name="Boore J.L."/>
            <person name="Jansen R.K."/>
        </authorList>
    </citation>
    <scope>NUCLEOTIDE SEQUENCE [LARGE SCALE GENOMIC DNA]</scope>
</reference>
<dbReference type="EMBL" id="EF380351">
    <property type="protein sequence ID" value="ABQ45284.1"/>
    <property type="molecule type" value="Genomic_DNA"/>
</dbReference>
<dbReference type="RefSeq" id="YP_001294220.1">
    <property type="nucleotide sequence ID" value="NC_009599.1"/>
</dbReference>
<dbReference type="SMR" id="A6MM72"/>
<dbReference type="GeneID" id="5236823"/>
<dbReference type="GO" id="GO:0009507">
    <property type="term" value="C:chloroplast"/>
    <property type="evidence" value="ECO:0007669"/>
    <property type="project" value="UniProtKB-SubCell"/>
</dbReference>
<dbReference type="GO" id="GO:1990904">
    <property type="term" value="C:ribonucleoprotein complex"/>
    <property type="evidence" value="ECO:0007669"/>
    <property type="project" value="UniProtKB-KW"/>
</dbReference>
<dbReference type="GO" id="GO:0005840">
    <property type="term" value="C:ribosome"/>
    <property type="evidence" value="ECO:0007669"/>
    <property type="project" value="UniProtKB-KW"/>
</dbReference>
<dbReference type="GO" id="GO:0019843">
    <property type="term" value="F:rRNA binding"/>
    <property type="evidence" value="ECO:0007669"/>
    <property type="project" value="UniProtKB-UniRule"/>
</dbReference>
<dbReference type="GO" id="GO:0003735">
    <property type="term" value="F:structural constituent of ribosome"/>
    <property type="evidence" value="ECO:0007669"/>
    <property type="project" value="InterPro"/>
</dbReference>
<dbReference type="GO" id="GO:0006412">
    <property type="term" value="P:translation"/>
    <property type="evidence" value="ECO:0007669"/>
    <property type="project" value="UniProtKB-UniRule"/>
</dbReference>
<dbReference type="FunFam" id="3.30.1490.10:FF:000001">
    <property type="entry name" value="30S ribosomal protein S8"/>
    <property type="match status" value="1"/>
</dbReference>
<dbReference type="FunFam" id="3.30.1370.30:FF:000004">
    <property type="entry name" value="30S ribosomal protein S8, chloroplastic"/>
    <property type="match status" value="1"/>
</dbReference>
<dbReference type="Gene3D" id="3.30.1370.30">
    <property type="match status" value="1"/>
</dbReference>
<dbReference type="Gene3D" id="3.30.1490.10">
    <property type="match status" value="1"/>
</dbReference>
<dbReference type="HAMAP" id="MF_01302_B">
    <property type="entry name" value="Ribosomal_uS8_B"/>
    <property type="match status" value="1"/>
</dbReference>
<dbReference type="InterPro" id="IPR000630">
    <property type="entry name" value="Ribosomal_uS8"/>
</dbReference>
<dbReference type="InterPro" id="IPR047863">
    <property type="entry name" value="Ribosomal_uS8_CS"/>
</dbReference>
<dbReference type="InterPro" id="IPR035987">
    <property type="entry name" value="Ribosomal_uS8_sf"/>
</dbReference>
<dbReference type="NCBIfam" id="NF001109">
    <property type="entry name" value="PRK00136.1"/>
    <property type="match status" value="1"/>
</dbReference>
<dbReference type="PANTHER" id="PTHR11758">
    <property type="entry name" value="40S RIBOSOMAL PROTEIN S15A"/>
    <property type="match status" value="1"/>
</dbReference>
<dbReference type="Pfam" id="PF00410">
    <property type="entry name" value="Ribosomal_S8"/>
    <property type="match status" value="1"/>
</dbReference>
<dbReference type="SUPFAM" id="SSF56047">
    <property type="entry name" value="Ribosomal protein S8"/>
    <property type="match status" value="1"/>
</dbReference>
<dbReference type="PROSITE" id="PS00053">
    <property type="entry name" value="RIBOSOMAL_S8"/>
    <property type="match status" value="1"/>
</dbReference>
<geneLocation type="chloroplast"/>
<evidence type="ECO:0000250" key="1"/>
<evidence type="ECO:0000305" key="2"/>
<feature type="chain" id="PRO_0000305774" description="Small ribosomal subunit protein uS8c">
    <location>
        <begin position="1"/>
        <end position="132"/>
    </location>
</feature>
<keyword id="KW-0150">Chloroplast</keyword>
<keyword id="KW-0934">Plastid</keyword>
<keyword id="KW-0687">Ribonucleoprotein</keyword>
<keyword id="KW-0689">Ribosomal protein</keyword>
<keyword id="KW-0694">RNA-binding</keyword>
<keyword id="KW-0699">rRNA-binding</keyword>
<organism>
    <name type="scientific">Buxus microphylla</name>
    <name type="common">Littleleaf boxwood</name>
    <name type="synonym">Japanese boxwood</name>
    <dbReference type="NCBI Taxonomy" id="153571"/>
    <lineage>
        <taxon>Eukaryota</taxon>
        <taxon>Viridiplantae</taxon>
        <taxon>Streptophyta</taxon>
        <taxon>Embryophyta</taxon>
        <taxon>Tracheophyta</taxon>
        <taxon>Spermatophyta</taxon>
        <taxon>Magnoliopsida</taxon>
        <taxon>Buxales</taxon>
        <taxon>Buxaceae</taxon>
        <taxon>Buxus</taxon>
    </lineage>
</organism>